<proteinExistence type="inferred from homology"/>
<accession>B7HGZ9</accession>
<name>TRPC_BACC4</name>
<organism>
    <name type="scientific">Bacillus cereus (strain B4264)</name>
    <dbReference type="NCBI Taxonomy" id="405532"/>
    <lineage>
        <taxon>Bacteria</taxon>
        <taxon>Bacillati</taxon>
        <taxon>Bacillota</taxon>
        <taxon>Bacilli</taxon>
        <taxon>Bacillales</taxon>
        <taxon>Bacillaceae</taxon>
        <taxon>Bacillus</taxon>
        <taxon>Bacillus cereus group</taxon>
    </lineage>
</organism>
<feature type="chain" id="PRO_1000117770" description="Indole-3-glycerol phosphate synthase">
    <location>
        <begin position="1"/>
        <end position="253"/>
    </location>
</feature>
<protein>
    <recommendedName>
        <fullName evidence="1">Indole-3-glycerol phosphate synthase</fullName>
        <shortName evidence="1">IGPS</shortName>
        <ecNumber evidence="1">4.1.1.48</ecNumber>
    </recommendedName>
</protein>
<evidence type="ECO:0000255" key="1">
    <source>
        <dbReference type="HAMAP-Rule" id="MF_00134"/>
    </source>
</evidence>
<comment type="catalytic activity">
    <reaction evidence="1">
        <text>1-(2-carboxyphenylamino)-1-deoxy-D-ribulose 5-phosphate + H(+) = (1S,2R)-1-C-(indol-3-yl)glycerol 3-phosphate + CO2 + H2O</text>
        <dbReference type="Rhea" id="RHEA:23476"/>
        <dbReference type="ChEBI" id="CHEBI:15377"/>
        <dbReference type="ChEBI" id="CHEBI:15378"/>
        <dbReference type="ChEBI" id="CHEBI:16526"/>
        <dbReference type="ChEBI" id="CHEBI:58613"/>
        <dbReference type="ChEBI" id="CHEBI:58866"/>
        <dbReference type="EC" id="4.1.1.48"/>
    </reaction>
</comment>
<comment type="pathway">
    <text evidence="1">Amino-acid biosynthesis; L-tryptophan biosynthesis; L-tryptophan from chorismate: step 4/5.</text>
</comment>
<comment type="similarity">
    <text evidence="1">Belongs to the TrpC family.</text>
</comment>
<keyword id="KW-0028">Amino-acid biosynthesis</keyword>
<keyword id="KW-0057">Aromatic amino acid biosynthesis</keyword>
<keyword id="KW-0210">Decarboxylase</keyword>
<keyword id="KW-0456">Lyase</keyword>
<keyword id="KW-0822">Tryptophan biosynthesis</keyword>
<reference key="1">
    <citation type="submission" date="2008-10" db="EMBL/GenBank/DDBJ databases">
        <title>Genome sequence of Bacillus cereus B4264.</title>
        <authorList>
            <person name="Dodson R.J."/>
            <person name="Durkin A.S."/>
            <person name="Rosovitz M.J."/>
            <person name="Rasko D.A."/>
            <person name="Hoffmaster A."/>
            <person name="Ravel J."/>
            <person name="Sutton G."/>
        </authorList>
    </citation>
    <scope>NUCLEOTIDE SEQUENCE [LARGE SCALE GENOMIC DNA]</scope>
    <source>
        <strain>B4264</strain>
    </source>
</reference>
<dbReference type="EC" id="4.1.1.48" evidence="1"/>
<dbReference type="EMBL" id="CP001176">
    <property type="protein sequence ID" value="ACK60144.1"/>
    <property type="molecule type" value="Genomic_DNA"/>
</dbReference>
<dbReference type="RefSeq" id="WP_000536679.1">
    <property type="nucleotide sequence ID" value="NC_011725.1"/>
</dbReference>
<dbReference type="SMR" id="B7HGZ9"/>
<dbReference type="KEGG" id="bcb:BCB4264_A1294"/>
<dbReference type="HOGENOM" id="CLU_034247_2_1_9"/>
<dbReference type="UniPathway" id="UPA00035">
    <property type="reaction ID" value="UER00043"/>
</dbReference>
<dbReference type="Proteomes" id="UP000007096">
    <property type="component" value="Chromosome"/>
</dbReference>
<dbReference type="GO" id="GO:0004425">
    <property type="term" value="F:indole-3-glycerol-phosphate synthase activity"/>
    <property type="evidence" value="ECO:0007669"/>
    <property type="project" value="UniProtKB-UniRule"/>
</dbReference>
<dbReference type="GO" id="GO:0004640">
    <property type="term" value="F:phosphoribosylanthranilate isomerase activity"/>
    <property type="evidence" value="ECO:0007669"/>
    <property type="project" value="TreeGrafter"/>
</dbReference>
<dbReference type="GO" id="GO:0000162">
    <property type="term" value="P:L-tryptophan biosynthetic process"/>
    <property type="evidence" value="ECO:0007669"/>
    <property type="project" value="UniProtKB-UniRule"/>
</dbReference>
<dbReference type="CDD" id="cd00331">
    <property type="entry name" value="IGPS"/>
    <property type="match status" value="1"/>
</dbReference>
<dbReference type="FunFam" id="3.20.20.70:FF:000024">
    <property type="entry name" value="Indole-3-glycerol phosphate synthase"/>
    <property type="match status" value="1"/>
</dbReference>
<dbReference type="Gene3D" id="3.20.20.70">
    <property type="entry name" value="Aldolase class I"/>
    <property type="match status" value="1"/>
</dbReference>
<dbReference type="HAMAP" id="MF_00134_B">
    <property type="entry name" value="IGPS_B"/>
    <property type="match status" value="1"/>
</dbReference>
<dbReference type="InterPro" id="IPR013785">
    <property type="entry name" value="Aldolase_TIM"/>
</dbReference>
<dbReference type="InterPro" id="IPR045186">
    <property type="entry name" value="Indole-3-glycerol_P_synth"/>
</dbReference>
<dbReference type="InterPro" id="IPR013798">
    <property type="entry name" value="Indole-3-glycerol_P_synth_dom"/>
</dbReference>
<dbReference type="InterPro" id="IPR001468">
    <property type="entry name" value="Indole-3-GlycerolPSynthase_CS"/>
</dbReference>
<dbReference type="InterPro" id="IPR011060">
    <property type="entry name" value="RibuloseP-bd_barrel"/>
</dbReference>
<dbReference type="NCBIfam" id="NF001371">
    <property type="entry name" value="PRK00278.1-3"/>
    <property type="match status" value="1"/>
</dbReference>
<dbReference type="NCBIfam" id="NF001377">
    <property type="entry name" value="PRK00278.2-4"/>
    <property type="match status" value="1"/>
</dbReference>
<dbReference type="PANTHER" id="PTHR22854:SF2">
    <property type="entry name" value="INDOLE-3-GLYCEROL-PHOSPHATE SYNTHASE"/>
    <property type="match status" value="1"/>
</dbReference>
<dbReference type="PANTHER" id="PTHR22854">
    <property type="entry name" value="TRYPTOPHAN BIOSYNTHESIS PROTEIN"/>
    <property type="match status" value="1"/>
</dbReference>
<dbReference type="Pfam" id="PF00218">
    <property type="entry name" value="IGPS"/>
    <property type="match status" value="1"/>
</dbReference>
<dbReference type="SUPFAM" id="SSF51366">
    <property type="entry name" value="Ribulose-phoshate binding barrel"/>
    <property type="match status" value="1"/>
</dbReference>
<dbReference type="PROSITE" id="PS00614">
    <property type="entry name" value="IGPS"/>
    <property type="match status" value="1"/>
</dbReference>
<gene>
    <name evidence="1" type="primary">trpC</name>
    <name type="ordered locus">BCB4264_A1294</name>
</gene>
<sequence>MGTILDEIVEQKQREVAELYEIYTPVKTKRKTHSLVEALQQFTVIAEVKRASPSKGDINLHVDVRKQVGTYEKCGAGAVSVLTDGQFFKGSFHDLQTAREESNIPLLCKDFIIDKIQIDRAYEAGADIILLIVAALTKEKLKELYSYVLEKGLEVIVEVHDEQELETAIVLNPHVIGINNRNLKTFEVDLSQTEKLGKRLNEEKLLWISESGIHSKEDIIRVKRAGAKGVLVGEALMTSSSISSFFEDCKVNI</sequence>